<dbReference type="EC" id="7.4.2.8" evidence="1"/>
<dbReference type="EMBL" id="CP000158">
    <property type="protein sequence ID" value="ABI76025.1"/>
    <property type="molecule type" value="Genomic_DNA"/>
</dbReference>
<dbReference type="RefSeq" id="WP_011648147.1">
    <property type="nucleotide sequence ID" value="NC_008358.1"/>
</dbReference>
<dbReference type="SMR" id="Q0BXE2"/>
<dbReference type="STRING" id="228405.HNE_3176"/>
<dbReference type="KEGG" id="hne:HNE_3176"/>
<dbReference type="eggNOG" id="COG0653">
    <property type="taxonomic scope" value="Bacteria"/>
</dbReference>
<dbReference type="HOGENOM" id="CLU_005314_3_0_5"/>
<dbReference type="Proteomes" id="UP000001959">
    <property type="component" value="Chromosome"/>
</dbReference>
<dbReference type="GO" id="GO:0031522">
    <property type="term" value="C:cell envelope Sec protein transport complex"/>
    <property type="evidence" value="ECO:0007669"/>
    <property type="project" value="TreeGrafter"/>
</dbReference>
<dbReference type="GO" id="GO:0005829">
    <property type="term" value="C:cytosol"/>
    <property type="evidence" value="ECO:0007669"/>
    <property type="project" value="TreeGrafter"/>
</dbReference>
<dbReference type="GO" id="GO:0005886">
    <property type="term" value="C:plasma membrane"/>
    <property type="evidence" value="ECO:0007669"/>
    <property type="project" value="UniProtKB-SubCell"/>
</dbReference>
<dbReference type="GO" id="GO:0005524">
    <property type="term" value="F:ATP binding"/>
    <property type="evidence" value="ECO:0007669"/>
    <property type="project" value="UniProtKB-UniRule"/>
</dbReference>
<dbReference type="GO" id="GO:0046872">
    <property type="term" value="F:metal ion binding"/>
    <property type="evidence" value="ECO:0007669"/>
    <property type="project" value="UniProtKB-KW"/>
</dbReference>
<dbReference type="GO" id="GO:0008564">
    <property type="term" value="F:protein-exporting ATPase activity"/>
    <property type="evidence" value="ECO:0007669"/>
    <property type="project" value="UniProtKB-EC"/>
</dbReference>
<dbReference type="GO" id="GO:0065002">
    <property type="term" value="P:intracellular protein transmembrane transport"/>
    <property type="evidence" value="ECO:0007669"/>
    <property type="project" value="UniProtKB-UniRule"/>
</dbReference>
<dbReference type="GO" id="GO:0017038">
    <property type="term" value="P:protein import"/>
    <property type="evidence" value="ECO:0007669"/>
    <property type="project" value="InterPro"/>
</dbReference>
<dbReference type="GO" id="GO:0006605">
    <property type="term" value="P:protein targeting"/>
    <property type="evidence" value="ECO:0007669"/>
    <property type="project" value="UniProtKB-UniRule"/>
</dbReference>
<dbReference type="GO" id="GO:0043952">
    <property type="term" value="P:protein transport by the Sec complex"/>
    <property type="evidence" value="ECO:0007669"/>
    <property type="project" value="TreeGrafter"/>
</dbReference>
<dbReference type="CDD" id="cd17928">
    <property type="entry name" value="DEXDc_SecA"/>
    <property type="match status" value="1"/>
</dbReference>
<dbReference type="CDD" id="cd18803">
    <property type="entry name" value="SF2_C_secA"/>
    <property type="match status" value="1"/>
</dbReference>
<dbReference type="FunFam" id="3.40.50.300:FF:000113">
    <property type="entry name" value="Preprotein translocase subunit SecA"/>
    <property type="match status" value="1"/>
</dbReference>
<dbReference type="FunFam" id="3.90.1440.10:FF:000001">
    <property type="entry name" value="Preprotein translocase subunit SecA"/>
    <property type="match status" value="1"/>
</dbReference>
<dbReference type="FunFam" id="1.10.3060.10:FF:000003">
    <property type="entry name" value="Protein translocase subunit SecA"/>
    <property type="match status" value="1"/>
</dbReference>
<dbReference type="FunFam" id="3.40.50.300:FF:000334">
    <property type="entry name" value="Protein translocase subunit SecA"/>
    <property type="match status" value="1"/>
</dbReference>
<dbReference type="Gene3D" id="3.10.450.50">
    <property type="match status" value="1"/>
</dbReference>
<dbReference type="Gene3D" id="1.10.3060.10">
    <property type="entry name" value="Helical scaffold and wing domains of SecA"/>
    <property type="match status" value="1"/>
</dbReference>
<dbReference type="Gene3D" id="3.40.50.300">
    <property type="entry name" value="P-loop containing nucleotide triphosphate hydrolases"/>
    <property type="match status" value="2"/>
</dbReference>
<dbReference type="Gene3D" id="3.90.1440.10">
    <property type="entry name" value="SecA, preprotein cross-linking domain"/>
    <property type="match status" value="1"/>
</dbReference>
<dbReference type="HAMAP" id="MF_01382">
    <property type="entry name" value="SecA"/>
    <property type="match status" value="1"/>
</dbReference>
<dbReference type="InterPro" id="IPR014001">
    <property type="entry name" value="Helicase_ATP-bd"/>
</dbReference>
<dbReference type="InterPro" id="IPR001650">
    <property type="entry name" value="Helicase_C-like"/>
</dbReference>
<dbReference type="InterPro" id="IPR027417">
    <property type="entry name" value="P-loop_NTPase"/>
</dbReference>
<dbReference type="InterPro" id="IPR004027">
    <property type="entry name" value="SEC_C_motif"/>
</dbReference>
<dbReference type="InterPro" id="IPR000185">
    <property type="entry name" value="SecA"/>
</dbReference>
<dbReference type="InterPro" id="IPR020937">
    <property type="entry name" value="SecA_CS"/>
</dbReference>
<dbReference type="InterPro" id="IPR011115">
    <property type="entry name" value="SecA_DEAD"/>
</dbReference>
<dbReference type="InterPro" id="IPR014018">
    <property type="entry name" value="SecA_motor_DEAD"/>
</dbReference>
<dbReference type="InterPro" id="IPR011130">
    <property type="entry name" value="SecA_preprotein_X-link_dom"/>
</dbReference>
<dbReference type="InterPro" id="IPR044722">
    <property type="entry name" value="SecA_SF2_C"/>
</dbReference>
<dbReference type="InterPro" id="IPR011116">
    <property type="entry name" value="SecA_Wing/Scaffold"/>
</dbReference>
<dbReference type="InterPro" id="IPR036266">
    <property type="entry name" value="SecA_Wing/Scaffold_sf"/>
</dbReference>
<dbReference type="InterPro" id="IPR036670">
    <property type="entry name" value="SecA_X-link_sf"/>
</dbReference>
<dbReference type="NCBIfam" id="NF009538">
    <property type="entry name" value="PRK12904.1"/>
    <property type="match status" value="1"/>
</dbReference>
<dbReference type="NCBIfam" id="TIGR00963">
    <property type="entry name" value="secA"/>
    <property type="match status" value="1"/>
</dbReference>
<dbReference type="PANTHER" id="PTHR30612:SF0">
    <property type="entry name" value="CHLOROPLAST PROTEIN-TRANSPORTING ATPASE"/>
    <property type="match status" value="1"/>
</dbReference>
<dbReference type="PANTHER" id="PTHR30612">
    <property type="entry name" value="SECA INNER MEMBRANE COMPONENT OF SEC PROTEIN SECRETION SYSTEM"/>
    <property type="match status" value="1"/>
</dbReference>
<dbReference type="Pfam" id="PF21090">
    <property type="entry name" value="P-loop_SecA"/>
    <property type="match status" value="1"/>
</dbReference>
<dbReference type="Pfam" id="PF02810">
    <property type="entry name" value="SEC-C"/>
    <property type="match status" value="1"/>
</dbReference>
<dbReference type="Pfam" id="PF07517">
    <property type="entry name" value="SecA_DEAD"/>
    <property type="match status" value="1"/>
</dbReference>
<dbReference type="Pfam" id="PF01043">
    <property type="entry name" value="SecA_PP_bind"/>
    <property type="match status" value="1"/>
</dbReference>
<dbReference type="Pfam" id="PF07516">
    <property type="entry name" value="SecA_SW"/>
    <property type="match status" value="1"/>
</dbReference>
<dbReference type="PRINTS" id="PR00906">
    <property type="entry name" value="SECA"/>
</dbReference>
<dbReference type="SMART" id="SM00957">
    <property type="entry name" value="SecA_DEAD"/>
    <property type="match status" value="1"/>
</dbReference>
<dbReference type="SMART" id="SM00958">
    <property type="entry name" value="SecA_PP_bind"/>
    <property type="match status" value="1"/>
</dbReference>
<dbReference type="SUPFAM" id="SSF81886">
    <property type="entry name" value="Helical scaffold and wing domains of SecA"/>
    <property type="match status" value="1"/>
</dbReference>
<dbReference type="SUPFAM" id="SSF52540">
    <property type="entry name" value="P-loop containing nucleoside triphosphate hydrolases"/>
    <property type="match status" value="2"/>
</dbReference>
<dbReference type="SUPFAM" id="SSF81767">
    <property type="entry name" value="Pre-protein crosslinking domain of SecA"/>
    <property type="match status" value="1"/>
</dbReference>
<dbReference type="PROSITE" id="PS01312">
    <property type="entry name" value="SECA"/>
    <property type="match status" value="1"/>
</dbReference>
<dbReference type="PROSITE" id="PS51196">
    <property type="entry name" value="SECA_MOTOR_DEAD"/>
    <property type="match status" value="1"/>
</dbReference>
<protein>
    <recommendedName>
        <fullName evidence="1">Protein translocase subunit SecA</fullName>
        <ecNumber evidence="1">7.4.2.8</ecNumber>
    </recommendedName>
</protein>
<organism>
    <name type="scientific">Hyphomonas neptunium (strain ATCC 15444)</name>
    <dbReference type="NCBI Taxonomy" id="228405"/>
    <lineage>
        <taxon>Bacteria</taxon>
        <taxon>Pseudomonadati</taxon>
        <taxon>Pseudomonadota</taxon>
        <taxon>Alphaproteobacteria</taxon>
        <taxon>Hyphomonadales</taxon>
        <taxon>Hyphomonadaceae</taxon>
        <taxon>Hyphomonas</taxon>
    </lineage>
</organism>
<feature type="chain" id="PRO_0000320830" description="Protein translocase subunit SecA">
    <location>
        <begin position="1"/>
        <end position="921"/>
    </location>
</feature>
<feature type="region of interest" description="Disordered" evidence="2">
    <location>
        <begin position="829"/>
        <end position="921"/>
    </location>
</feature>
<feature type="compositionally biased region" description="Low complexity" evidence="2">
    <location>
        <begin position="829"/>
        <end position="838"/>
    </location>
</feature>
<feature type="compositionally biased region" description="Pro residues" evidence="2">
    <location>
        <begin position="839"/>
        <end position="855"/>
    </location>
</feature>
<feature type="binding site" evidence="1">
    <location>
        <position position="86"/>
    </location>
    <ligand>
        <name>ATP</name>
        <dbReference type="ChEBI" id="CHEBI:30616"/>
    </ligand>
</feature>
<feature type="binding site" evidence="1">
    <location>
        <begin position="104"/>
        <end position="108"/>
    </location>
    <ligand>
        <name>ATP</name>
        <dbReference type="ChEBI" id="CHEBI:30616"/>
    </ligand>
</feature>
<feature type="binding site" evidence="1">
    <location>
        <position position="497"/>
    </location>
    <ligand>
        <name>ATP</name>
        <dbReference type="ChEBI" id="CHEBI:30616"/>
    </ligand>
</feature>
<feature type="binding site" evidence="1">
    <location>
        <position position="901"/>
    </location>
    <ligand>
        <name>Zn(2+)</name>
        <dbReference type="ChEBI" id="CHEBI:29105"/>
    </ligand>
</feature>
<feature type="binding site" evidence="1">
    <location>
        <position position="903"/>
    </location>
    <ligand>
        <name>Zn(2+)</name>
        <dbReference type="ChEBI" id="CHEBI:29105"/>
    </ligand>
</feature>
<feature type="binding site" evidence="1">
    <location>
        <position position="912"/>
    </location>
    <ligand>
        <name>Zn(2+)</name>
        <dbReference type="ChEBI" id="CHEBI:29105"/>
    </ligand>
</feature>
<feature type="binding site" evidence="1">
    <location>
        <position position="913"/>
    </location>
    <ligand>
        <name>Zn(2+)</name>
        <dbReference type="ChEBI" id="CHEBI:29105"/>
    </ligand>
</feature>
<accession>Q0BXE2</accession>
<evidence type="ECO:0000255" key="1">
    <source>
        <dbReference type="HAMAP-Rule" id="MF_01382"/>
    </source>
</evidence>
<evidence type="ECO:0000256" key="2">
    <source>
        <dbReference type="SAM" id="MobiDB-lite"/>
    </source>
</evidence>
<sequence>MLSIARKIFGTVNDRKLKPLQARVNRINALEPIMEALSDQSLKGKTAEFRKRLADGATLDSLLEEAFAVVREAAKRVNNMRHFDVQLMGGMILHSGAIAEMRTGEGKTLVATLAAYLNALEGKGVHVITVNDYLARRDADWMGRIYGALGMSTGVIVHGVSDEQRKAGYAADITYGTNNEFGFDYLRDNMKYSLDQMAQRGHHYAIVDEVDSILIDEARTPLIISGPTDDRSELYMAVDALIPRLEDSDFELDEKQRSVVFTETGSEKMEEWLTEAGVLEGSLWEPSNISLVHHSNQALRAHKLYARDKDYIVKDDSVMLIDEFSGRMMEGRRLSEGLHQAIEAKERVDIKPENQTLASITFQNYFRLYKKLAGMTGTALTEASEFADIYKLEVVDLPTNRPVRRLDEDDVVYRTAKAKYNEIIKEVRAANAKAQPILLGTASIEKSELLSHLLTAQRIPHKVLNARHHEQEAFIVAEAGVPGAVTVATNMAGRGTDIQLGGNFDMRLENERAAKEKALGRELSEGETSLLGAQIRADIEVKKKQALDAGGLYVLGTERHESRRIDNQLRGRTGRQGDPGKSKFYISIEDDLMRIFAADRMDAVMRRLGIKEDEGITHPWMNKAMETSQKKIEERNFEIRKNVLKYDDVINDQRKAIFEQRMEFLRSDDVSDVIEEMRESVIEALVARTMPEKAYAEQWDITGLEESLKTDLALDLPVREWAAEEGVANEEIAGRIREAVEGQYAELTRLIGEPQMRRIEKQFLLQVLDMRWREHLQQIDQLRSVIHLRSYGQRDPLNEFKREAFNLFDTLLGELRATVTRSLMHIRVQQAPQQQPQQVAPPPRPQPPQPAPQPPQQIRETKLDPDTGVNEMNPADKTQPPGPALHQAEDDWTNTPRNSACPCGSGKKYKHCHGAIETQKA</sequence>
<comment type="function">
    <text evidence="1">Part of the Sec protein translocase complex. Interacts with the SecYEG preprotein conducting channel. Has a central role in coupling the hydrolysis of ATP to the transfer of proteins into and across the cell membrane, serving both as a receptor for the preprotein-SecB complex and as an ATP-driven molecular motor driving the stepwise translocation of polypeptide chains across the membrane.</text>
</comment>
<comment type="catalytic activity">
    <reaction evidence="1">
        <text>ATP + H2O + cellular proteinSide 1 = ADP + phosphate + cellular proteinSide 2.</text>
        <dbReference type="EC" id="7.4.2.8"/>
    </reaction>
</comment>
<comment type="cofactor">
    <cofactor evidence="1">
        <name>Zn(2+)</name>
        <dbReference type="ChEBI" id="CHEBI:29105"/>
    </cofactor>
    <text evidence="1">May bind 1 zinc ion per subunit.</text>
</comment>
<comment type="subunit">
    <text evidence="1">Monomer and homodimer. Part of the essential Sec protein translocation apparatus which comprises SecA, SecYEG and auxiliary proteins SecDF-YajC and YidC.</text>
</comment>
<comment type="subcellular location">
    <subcellularLocation>
        <location evidence="1">Cell inner membrane</location>
        <topology evidence="1">Peripheral membrane protein</topology>
        <orientation evidence="1">Cytoplasmic side</orientation>
    </subcellularLocation>
    <subcellularLocation>
        <location evidence="1">Cytoplasm</location>
    </subcellularLocation>
    <text evidence="1">Distribution is 50-50.</text>
</comment>
<comment type="similarity">
    <text evidence="1">Belongs to the SecA family.</text>
</comment>
<proteinExistence type="inferred from homology"/>
<gene>
    <name evidence="1" type="primary">secA</name>
    <name type="ordered locus">HNE_3176</name>
</gene>
<name>SECA_HYPNA</name>
<keyword id="KW-0067">ATP-binding</keyword>
<keyword id="KW-0997">Cell inner membrane</keyword>
<keyword id="KW-1003">Cell membrane</keyword>
<keyword id="KW-0963">Cytoplasm</keyword>
<keyword id="KW-0472">Membrane</keyword>
<keyword id="KW-0479">Metal-binding</keyword>
<keyword id="KW-0547">Nucleotide-binding</keyword>
<keyword id="KW-0653">Protein transport</keyword>
<keyword id="KW-1185">Reference proteome</keyword>
<keyword id="KW-1278">Translocase</keyword>
<keyword id="KW-0811">Translocation</keyword>
<keyword id="KW-0813">Transport</keyword>
<keyword id="KW-0862">Zinc</keyword>
<reference key="1">
    <citation type="journal article" date="2006" name="J. Bacteriol.">
        <title>Comparative genomic evidence for a close relationship between the dimorphic prosthecate bacteria Hyphomonas neptunium and Caulobacter crescentus.</title>
        <authorList>
            <person name="Badger J.H."/>
            <person name="Hoover T.R."/>
            <person name="Brun Y.V."/>
            <person name="Weiner R.M."/>
            <person name="Laub M.T."/>
            <person name="Alexandre G."/>
            <person name="Mrazek J."/>
            <person name="Ren Q."/>
            <person name="Paulsen I.T."/>
            <person name="Nelson K.E."/>
            <person name="Khouri H.M."/>
            <person name="Radune D."/>
            <person name="Sosa J."/>
            <person name="Dodson R.J."/>
            <person name="Sullivan S.A."/>
            <person name="Rosovitz M.J."/>
            <person name="Madupu R."/>
            <person name="Brinkac L.M."/>
            <person name="Durkin A.S."/>
            <person name="Daugherty S.C."/>
            <person name="Kothari S.P."/>
            <person name="Giglio M.G."/>
            <person name="Zhou L."/>
            <person name="Haft D.H."/>
            <person name="Selengut J.D."/>
            <person name="Davidsen T.M."/>
            <person name="Yang Q."/>
            <person name="Zafar N."/>
            <person name="Ward N.L."/>
        </authorList>
    </citation>
    <scope>NUCLEOTIDE SEQUENCE [LARGE SCALE GENOMIC DNA]</scope>
    <source>
        <strain>ATCC 15444</strain>
    </source>
</reference>